<dbReference type="EMBL" id="AE006468">
    <property type="protein sequence ID" value="AAL22529.1"/>
    <property type="molecule type" value="Genomic_DNA"/>
</dbReference>
<dbReference type="RefSeq" id="NP_462570.1">
    <property type="nucleotide sequence ID" value="NC_003197.2"/>
</dbReference>
<dbReference type="RefSeq" id="WP_000794981.1">
    <property type="nucleotide sequence ID" value="NC_003197.2"/>
</dbReference>
<dbReference type="SMR" id="Q8ZL81"/>
<dbReference type="STRING" id="99287.STM3670"/>
<dbReference type="PaxDb" id="99287-STM3670"/>
<dbReference type="DNASU" id="1255194"/>
<dbReference type="GeneID" id="1255194"/>
<dbReference type="KEGG" id="stm:STM3670"/>
<dbReference type="PATRIC" id="fig|99287.12.peg.3883"/>
<dbReference type="HOGENOM" id="CLU_077119_0_0_6"/>
<dbReference type="OMA" id="TINWGRS"/>
<dbReference type="BioCyc" id="SENT99287:STM3670-MONOMER"/>
<dbReference type="Proteomes" id="UP000001014">
    <property type="component" value="Chromosome"/>
</dbReference>
<dbReference type="InterPro" id="IPR032344">
    <property type="entry name" value="DUF4862"/>
</dbReference>
<dbReference type="InterPro" id="IPR036237">
    <property type="entry name" value="Xyl_isomerase-like_sf"/>
</dbReference>
<dbReference type="Pfam" id="PF16154">
    <property type="entry name" value="DUF4862"/>
    <property type="match status" value="1"/>
</dbReference>
<dbReference type="SUPFAM" id="SSF51658">
    <property type="entry name" value="Xylose isomerase-like"/>
    <property type="match status" value="1"/>
</dbReference>
<gene>
    <name type="ordered locus">STM3670</name>
</gene>
<reference key="1">
    <citation type="journal article" date="2001" name="Nature">
        <title>Complete genome sequence of Salmonella enterica serovar Typhimurium LT2.</title>
        <authorList>
            <person name="McClelland M."/>
            <person name="Sanderson K.E."/>
            <person name="Spieth J."/>
            <person name="Clifton S.W."/>
            <person name="Latreille P."/>
            <person name="Courtney L."/>
            <person name="Porwollik S."/>
            <person name="Ali J."/>
            <person name="Dante M."/>
            <person name="Du F."/>
            <person name="Hou S."/>
            <person name="Layman D."/>
            <person name="Leonard S."/>
            <person name="Nguyen C."/>
            <person name="Scott K."/>
            <person name="Holmes A."/>
            <person name="Grewal N."/>
            <person name="Mulvaney E."/>
            <person name="Ryan E."/>
            <person name="Sun H."/>
            <person name="Florea L."/>
            <person name="Miller W."/>
            <person name="Stoneking T."/>
            <person name="Nhan M."/>
            <person name="Waterston R."/>
            <person name="Wilson R.K."/>
        </authorList>
    </citation>
    <scope>NUCLEOTIDE SEQUENCE [LARGE SCALE GENOMIC DNA]</scope>
    <source>
        <strain>LT2 / SGSC1412 / ATCC 700720</strain>
    </source>
</reference>
<keyword id="KW-1185">Reference proteome</keyword>
<evidence type="ECO:0000305" key="1"/>
<sequence>MKNNTGYIIGAYPCAPSFHQKSEEEETEFWRQLSDTPDIRGLEQPCLEHLHPLGDEWLLRHTPGNWQIVVTAIMETMRRRSENGGFGLASSDEEQRKACVEYYRHLYQKINKINGNNTGKVIALELHAAPLAGNPNVAQATDAFARSLKEIANWDWSCDLVLEHCDAMTGPAPRKGFLPLVNVLETIADYDISVCINWARSAIEGRDTSLPLIHTQQAKQAGKLGALMFSGTTLDGEYGEWQDLHAPFAPFCPQSLMTEKHVKELITAAAPELLQFTGIKLLEINASADINHRINILRDGINMMKKATRR</sequence>
<accession>Q8ZL81</accession>
<organism>
    <name type="scientific">Salmonella typhimurium (strain LT2 / SGSC1412 / ATCC 700720)</name>
    <dbReference type="NCBI Taxonomy" id="99287"/>
    <lineage>
        <taxon>Bacteria</taxon>
        <taxon>Pseudomonadati</taxon>
        <taxon>Pseudomonadota</taxon>
        <taxon>Gammaproteobacteria</taxon>
        <taxon>Enterobacterales</taxon>
        <taxon>Enterobacteriaceae</taxon>
        <taxon>Salmonella</taxon>
    </lineage>
</organism>
<proteinExistence type="inferred from homology"/>
<name>Y3670_SALTY</name>
<protein>
    <recommendedName>
        <fullName>Uncharacterized protein STM3670</fullName>
    </recommendedName>
</protein>
<feature type="chain" id="PRO_0000398871" description="Uncharacterized protein STM3670">
    <location>
        <begin position="1"/>
        <end position="310"/>
    </location>
</feature>
<comment type="similarity">
    <text evidence="1">Belongs to the YiaX1 family.</text>
</comment>